<organism>
    <name type="scientific">Arabidopsis thaliana</name>
    <name type="common">Mouse-ear cress</name>
    <dbReference type="NCBI Taxonomy" id="3702"/>
    <lineage>
        <taxon>Eukaryota</taxon>
        <taxon>Viridiplantae</taxon>
        <taxon>Streptophyta</taxon>
        <taxon>Embryophyta</taxon>
        <taxon>Tracheophyta</taxon>
        <taxon>Spermatophyta</taxon>
        <taxon>Magnoliopsida</taxon>
        <taxon>eudicotyledons</taxon>
        <taxon>Gunneridae</taxon>
        <taxon>Pentapetalae</taxon>
        <taxon>rosids</taxon>
        <taxon>malvids</taxon>
        <taxon>Brassicales</taxon>
        <taxon>Brassicaceae</taxon>
        <taxon>Camelineae</taxon>
        <taxon>Arabidopsis</taxon>
    </lineage>
</organism>
<dbReference type="EMBL" id="AC068809">
    <property type="status" value="NOT_ANNOTATED_CDS"/>
    <property type="molecule type" value="Genomic_DNA"/>
</dbReference>
<dbReference type="EMBL" id="CP002688">
    <property type="protein sequence ID" value="AED92641.1"/>
    <property type="molecule type" value="Genomic_DNA"/>
</dbReference>
<dbReference type="RefSeq" id="NP_001190335.1">
    <property type="nucleotide sequence ID" value="NM_001203406.2"/>
</dbReference>
<dbReference type="FunCoup" id="P0C8Q9">
    <property type="interactions" value="662"/>
</dbReference>
<dbReference type="PaxDb" id="3702-AT5G19025.1"/>
<dbReference type="ProteomicsDB" id="242871"/>
<dbReference type="EnsemblPlants" id="AT5G19025.1">
    <property type="protein sequence ID" value="AT5G19025.1"/>
    <property type="gene ID" value="AT5G19025"/>
</dbReference>
<dbReference type="GeneID" id="10723085"/>
<dbReference type="Gramene" id="AT5G19025.1">
    <property type="protein sequence ID" value="AT5G19025.1"/>
    <property type="gene ID" value="AT5G19025"/>
</dbReference>
<dbReference type="KEGG" id="ath:AT5G19025"/>
<dbReference type="Araport" id="AT5G19025"/>
<dbReference type="TAIR" id="AT5G19025"/>
<dbReference type="eggNOG" id="KOG4197">
    <property type="taxonomic scope" value="Eukaryota"/>
</dbReference>
<dbReference type="HOGENOM" id="CLU_092200_0_0_1"/>
<dbReference type="InParanoid" id="P0C8Q9"/>
<dbReference type="PRO" id="PR:P0C8Q9"/>
<dbReference type="Proteomes" id="UP000006548">
    <property type="component" value="Chromosome 5"/>
</dbReference>
<dbReference type="ExpressionAtlas" id="P0C8Q9">
    <property type="expression patterns" value="baseline and differential"/>
</dbReference>
<dbReference type="GO" id="GO:0016020">
    <property type="term" value="C:membrane"/>
    <property type="evidence" value="ECO:0007669"/>
    <property type="project" value="UniProtKB-SubCell"/>
</dbReference>
<dbReference type="InterPro" id="IPR044196">
    <property type="entry name" value="At5g19025-like"/>
</dbReference>
<dbReference type="PANTHER" id="PTHR47479">
    <property type="entry name" value="OS05G0393200 PROTEIN"/>
    <property type="match status" value="1"/>
</dbReference>
<dbReference type="PANTHER" id="PTHR47479:SF5">
    <property type="entry name" value="RIBOSOMAL PROTEIN L34E SUPERFAMILY PROTEIN"/>
    <property type="match status" value="1"/>
</dbReference>
<evidence type="ECO:0000255" key="1"/>
<evidence type="ECO:0000305" key="2"/>
<reference key="1">
    <citation type="journal article" date="2000" name="Nature">
        <title>Sequence and analysis of chromosome 5 of the plant Arabidopsis thaliana.</title>
        <authorList>
            <person name="Tabata S."/>
            <person name="Kaneko T."/>
            <person name="Nakamura Y."/>
            <person name="Kotani H."/>
            <person name="Kato T."/>
            <person name="Asamizu E."/>
            <person name="Miyajima N."/>
            <person name="Sasamoto S."/>
            <person name="Kimura T."/>
            <person name="Hosouchi T."/>
            <person name="Kawashima K."/>
            <person name="Kohara M."/>
            <person name="Matsumoto M."/>
            <person name="Matsuno A."/>
            <person name="Muraki A."/>
            <person name="Nakayama S."/>
            <person name="Nakazaki N."/>
            <person name="Naruo K."/>
            <person name="Okumura S."/>
            <person name="Shinpo S."/>
            <person name="Takeuchi C."/>
            <person name="Wada T."/>
            <person name="Watanabe A."/>
            <person name="Yamada M."/>
            <person name="Yasuda M."/>
            <person name="Sato S."/>
            <person name="de la Bastide M."/>
            <person name="Huang E."/>
            <person name="Spiegel L."/>
            <person name="Gnoj L."/>
            <person name="O'Shaughnessy A."/>
            <person name="Preston R."/>
            <person name="Habermann K."/>
            <person name="Murray J."/>
            <person name="Johnson D."/>
            <person name="Rohlfing T."/>
            <person name="Nelson J."/>
            <person name="Stoneking T."/>
            <person name="Pepin K."/>
            <person name="Spieth J."/>
            <person name="Sekhon M."/>
            <person name="Armstrong J."/>
            <person name="Becker M."/>
            <person name="Belter E."/>
            <person name="Cordum H."/>
            <person name="Cordes M."/>
            <person name="Courtney L."/>
            <person name="Courtney W."/>
            <person name="Dante M."/>
            <person name="Du H."/>
            <person name="Edwards J."/>
            <person name="Fryman J."/>
            <person name="Haakensen B."/>
            <person name="Lamar E."/>
            <person name="Latreille P."/>
            <person name="Leonard S."/>
            <person name="Meyer R."/>
            <person name="Mulvaney E."/>
            <person name="Ozersky P."/>
            <person name="Riley A."/>
            <person name="Strowmatt C."/>
            <person name="Wagner-McPherson C."/>
            <person name="Wollam A."/>
            <person name="Yoakum M."/>
            <person name="Bell M."/>
            <person name="Dedhia N."/>
            <person name="Parnell L."/>
            <person name="Shah R."/>
            <person name="Rodriguez M."/>
            <person name="Hoon See L."/>
            <person name="Vil D."/>
            <person name="Baker J."/>
            <person name="Kirchoff K."/>
            <person name="Toth K."/>
            <person name="King L."/>
            <person name="Bahret A."/>
            <person name="Miller B."/>
            <person name="Marra M.A."/>
            <person name="Martienssen R."/>
            <person name="McCombie W.R."/>
            <person name="Wilson R.K."/>
            <person name="Murphy G."/>
            <person name="Bancroft I."/>
            <person name="Volckaert G."/>
            <person name="Wambutt R."/>
            <person name="Duesterhoeft A."/>
            <person name="Stiekema W."/>
            <person name="Pohl T."/>
            <person name="Entian K.-D."/>
            <person name="Terryn N."/>
            <person name="Hartley N."/>
            <person name="Bent E."/>
            <person name="Johnson S."/>
            <person name="Langham S.-A."/>
            <person name="McCullagh B."/>
            <person name="Robben J."/>
            <person name="Grymonprez B."/>
            <person name="Zimmermann W."/>
            <person name="Ramsperger U."/>
            <person name="Wedler H."/>
            <person name="Balke K."/>
            <person name="Wedler E."/>
            <person name="Peters S."/>
            <person name="van Staveren M."/>
            <person name="Dirkse W."/>
            <person name="Mooijman P."/>
            <person name="Klein Lankhorst R."/>
            <person name="Weitzenegger T."/>
            <person name="Bothe G."/>
            <person name="Rose M."/>
            <person name="Hauf J."/>
            <person name="Berneiser S."/>
            <person name="Hempel S."/>
            <person name="Feldpausch M."/>
            <person name="Lamberth S."/>
            <person name="Villarroel R."/>
            <person name="Gielen J."/>
            <person name="Ardiles W."/>
            <person name="Bents O."/>
            <person name="Lemcke K."/>
            <person name="Kolesov G."/>
            <person name="Mayer K.F.X."/>
            <person name="Rudd S."/>
            <person name="Schoof H."/>
            <person name="Schueller C."/>
            <person name="Zaccaria P."/>
            <person name="Mewes H.-W."/>
            <person name="Bevan M."/>
            <person name="Fransz P.F."/>
        </authorList>
    </citation>
    <scope>NUCLEOTIDE SEQUENCE [LARGE SCALE GENOMIC DNA]</scope>
    <source>
        <strain>cv. Columbia</strain>
    </source>
</reference>
<reference key="2">
    <citation type="journal article" date="2017" name="Plant J.">
        <title>Araport11: a complete reannotation of the Arabidopsis thaliana reference genome.</title>
        <authorList>
            <person name="Cheng C.Y."/>
            <person name="Krishnakumar V."/>
            <person name="Chan A.P."/>
            <person name="Thibaud-Nissen F."/>
            <person name="Schobel S."/>
            <person name="Town C.D."/>
        </authorList>
    </citation>
    <scope>GENOME REANNOTATION</scope>
    <source>
        <strain>cv. Columbia</strain>
    </source>
</reference>
<proteinExistence type="evidence at transcript level"/>
<sequence>MLHLFLFSSAASTTTAVEDNSTTMPPSSRSAANQNSSSSLHLCKHSPSATLDLLILILVLFSGTFLLSSYFSYLIHSLSLLSSHFPSITISLSSLLPPLIIFFSSDHSTEDEDHHHPSGKIPPPASFFFAFAVFFAASIAFLDLCCGSRSRKCRNPKCKGMKKAMEFDLQLQTEECVKSGSVKEIDRLPWKGGSESNPDYECLRAELRKMAPVNGRAVLIFRSKCGCPIAKLEGWGPKRSRRHKKSPAKLAVKGCIDNR</sequence>
<gene>
    <name type="ordered locus">At5g19025</name>
    <name type="ORF">T16G12_60</name>
</gene>
<keyword id="KW-0472">Membrane</keyword>
<keyword id="KW-1185">Reference proteome</keyword>
<keyword id="KW-0812">Transmembrane</keyword>
<keyword id="KW-1133">Transmembrane helix</keyword>
<name>Y5902_ARATH</name>
<protein>
    <recommendedName>
        <fullName>Uncharacterized protein At5g19025</fullName>
    </recommendedName>
</protein>
<feature type="chain" id="PRO_0000363495" description="Uncharacterized protein At5g19025">
    <location>
        <begin position="1"/>
        <end position="259"/>
    </location>
</feature>
<feature type="transmembrane region" description="Helical" evidence="1">
    <location>
        <begin position="55"/>
        <end position="75"/>
    </location>
</feature>
<feature type="transmembrane region" description="Helical" evidence="1">
    <location>
        <begin position="85"/>
        <end position="105"/>
    </location>
</feature>
<feature type="transmembrane region" description="Helical" evidence="1">
    <location>
        <begin position="127"/>
        <end position="147"/>
    </location>
</feature>
<comment type="subcellular location">
    <subcellularLocation>
        <location evidence="2">Membrane</location>
        <topology evidence="2">Multi-pass membrane protein</topology>
    </subcellularLocation>
</comment>
<accession>P0C8Q9</accession>
<accession>Q3E9D2</accession>